<feature type="signal peptide" evidence="2">
    <location>
        <begin position="1"/>
        <end position="22"/>
    </location>
</feature>
<feature type="chain" id="PRO_0000019685" description="Nicastrin">
    <location>
        <begin position="23"/>
        <end position="695"/>
    </location>
</feature>
<feature type="topological domain" description="Extracellular" evidence="2">
    <location>
        <begin position="23"/>
        <end position="654"/>
    </location>
</feature>
<feature type="transmembrane region" description="Helical" evidence="2">
    <location>
        <begin position="655"/>
        <end position="675"/>
    </location>
</feature>
<feature type="topological domain" description="Cytoplasmic" evidence="2">
    <location>
        <begin position="676"/>
        <end position="695"/>
    </location>
</feature>
<feature type="glycosylation site" description="N-linked (GlcNAc...) asparagine" evidence="2">
    <location>
        <position position="45"/>
    </location>
</feature>
<feature type="glycosylation site" description="N-linked (GlcNAc...) asparagine" evidence="2">
    <location>
        <position position="108"/>
    </location>
</feature>
<feature type="glycosylation site" description="N-linked (GlcNAc...) asparagine" evidence="2">
    <location>
        <position position="116"/>
    </location>
</feature>
<feature type="glycosylation site" description="N-linked (GlcNAc...) asparagine" evidence="2">
    <location>
        <position position="138"/>
    </location>
</feature>
<feature type="glycosylation site" description="N-linked (GlcNAc...) asparagine" evidence="2">
    <location>
        <position position="381"/>
    </location>
</feature>
<feature type="glycosylation site" description="N-linked (GlcNAc...) asparagine" evidence="2">
    <location>
        <position position="461"/>
    </location>
</feature>
<feature type="glycosylation site" description="N-linked (GlcNAc...) asparagine" evidence="2">
    <location>
        <position position="489"/>
    </location>
</feature>
<feature type="glycosylation site" description="N-linked (GlcNAc...) asparagine" evidence="2">
    <location>
        <position position="585"/>
    </location>
</feature>
<feature type="glycosylation site" description="N-linked (GlcNAc...) asparagine" evidence="2">
    <location>
        <position position="609"/>
    </location>
</feature>
<feature type="sequence conflict" description="In Ref. 1; AAG11414." evidence="8" ref="1">
    <original>YATLYPRKPAIENN</original>
    <variation>SPPCTPESQQSETT</variation>
    <location>
        <begin position="244"/>
        <end position="257"/>
    </location>
</feature>
<feature type="sequence conflict" description="In Ref. 1; AAG11414." evidence="8" ref="1">
    <original>I</original>
    <variation>T</variation>
    <location>
        <position position="448"/>
    </location>
</feature>
<gene>
    <name evidence="9" type="primary">Nct</name>
    <name type="synonym">NCSTN</name>
    <name evidence="9" type="ORF">CG7012</name>
</gene>
<dbReference type="EMBL" id="AF240470">
    <property type="protein sequence ID" value="AAG11414.1"/>
    <property type="molecule type" value="mRNA"/>
</dbReference>
<dbReference type="EMBL" id="AE014297">
    <property type="protein sequence ID" value="AAF56349.2"/>
    <property type="molecule type" value="Genomic_DNA"/>
</dbReference>
<dbReference type="EMBL" id="BT003245">
    <property type="protein sequence ID" value="AAO25002.1"/>
    <property type="status" value="ALT_INIT"/>
    <property type="molecule type" value="mRNA"/>
</dbReference>
<dbReference type="RefSeq" id="NP_001163713.1">
    <property type="nucleotide sequence ID" value="NM_001170242.2"/>
</dbReference>
<dbReference type="RefSeq" id="NP_651297.2">
    <property type="nucleotide sequence ID" value="NM_143040.5"/>
</dbReference>
<dbReference type="SMR" id="Q9VC27"/>
<dbReference type="BioGRID" id="67889">
    <property type="interactions" value="9"/>
</dbReference>
<dbReference type="ComplexPortal" id="CPX-2673">
    <property type="entry name" value="Gamma-secretase complex"/>
</dbReference>
<dbReference type="DIP" id="DIP-23689N"/>
<dbReference type="FunCoup" id="Q9VC27">
    <property type="interactions" value="2047"/>
</dbReference>
<dbReference type="IntAct" id="Q9VC27">
    <property type="interactions" value="3"/>
</dbReference>
<dbReference type="STRING" id="7227.FBpp0306637"/>
<dbReference type="GlyCosmos" id="Q9VC27">
    <property type="glycosylation" value="9 sites, No reported glycans"/>
</dbReference>
<dbReference type="GlyGen" id="Q9VC27">
    <property type="glycosylation" value="9 sites"/>
</dbReference>
<dbReference type="PaxDb" id="7227-FBpp0291079"/>
<dbReference type="DNASU" id="42964"/>
<dbReference type="EnsemblMetazoa" id="FBtr0084705">
    <property type="protein sequence ID" value="FBpp0084083"/>
    <property type="gene ID" value="FBgn0039234"/>
</dbReference>
<dbReference type="EnsemblMetazoa" id="FBtr0301865">
    <property type="protein sequence ID" value="FBpp0291079"/>
    <property type="gene ID" value="FBgn0039234"/>
</dbReference>
<dbReference type="GeneID" id="42964"/>
<dbReference type="KEGG" id="dme:Dmel_CG7012"/>
<dbReference type="UCSC" id="CG7012-RA">
    <property type="organism name" value="d. melanogaster"/>
</dbReference>
<dbReference type="AGR" id="FB:FBgn0039234"/>
<dbReference type="CTD" id="42964"/>
<dbReference type="FlyBase" id="FBgn0039234">
    <property type="gene designation" value="Nct"/>
</dbReference>
<dbReference type="VEuPathDB" id="VectorBase:FBgn0039234"/>
<dbReference type="eggNOG" id="KOG2657">
    <property type="taxonomic scope" value="Eukaryota"/>
</dbReference>
<dbReference type="GeneTree" id="ENSGT00390000014633"/>
<dbReference type="InParanoid" id="Q9VC27"/>
<dbReference type="OrthoDB" id="755951at2759"/>
<dbReference type="PhylomeDB" id="Q9VC27"/>
<dbReference type="Reactome" id="R-DME-1251985">
    <property type="pathway name" value="Nuclear signaling by ERBB4"/>
</dbReference>
<dbReference type="Reactome" id="R-DME-3928665">
    <property type="pathway name" value="EPH-ephrin mediated repulsion of cells"/>
</dbReference>
<dbReference type="Reactome" id="R-DME-6798695">
    <property type="pathway name" value="Neutrophil degranulation"/>
</dbReference>
<dbReference type="SignaLink" id="Q9VC27"/>
<dbReference type="BioGRID-ORCS" id="42964">
    <property type="hits" value="0 hits in 1 CRISPR screen"/>
</dbReference>
<dbReference type="GenomeRNAi" id="42964"/>
<dbReference type="PRO" id="PR:Q9VC27"/>
<dbReference type="Proteomes" id="UP000000803">
    <property type="component" value="Chromosome 3R"/>
</dbReference>
<dbReference type="Bgee" id="FBgn0039234">
    <property type="expression patterns" value="Expressed in wing disc and 84 other cell types or tissues"/>
</dbReference>
<dbReference type="ExpressionAtlas" id="Q9VC27">
    <property type="expression patterns" value="baseline and differential"/>
</dbReference>
<dbReference type="GO" id="GO:0070765">
    <property type="term" value="C:gamma-secretase complex"/>
    <property type="evidence" value="ECO:0000314"/>
    <property type="project" value="UniProtKB"/>
</dbReference>
<dbReference type="GO" id="GO:0005770">
    <property type="term" value="C:late endosome"/>
    <property type="evidence" value="ECO:0000314"/>
    <property type="project" value="FlyBase"/>
</dbReference>
<dbReference type="GO" id="GO:0005886">
    <property type="term" value="C:plasma membrane"/>
    <property type="evidence" value="ECO:0007005"/>
    <property type="project" value="FlyBase"/>
</dbReference>
<dbReference type="GO" id="GO:0055037">
    <property type="term" value="C:recycling endosome"/>
    <property type="evidence" value="ECO:0000314"/>
    <property type="project" value="FlyBase"/>
</dbReference>
<dbReference type="GO" id="GO:0034205">
    <property type="term" value="P:amyloid-beta formation"/>
    <property type="evidence" value="ECO:0000314"/>
    <property type="project" value="FlyBase"/>
</dbReference>
<dbReference type="GO" id="GO:0046331">
    <property type="term" value="P:lateral inhibition"/>
    <property type="evidence" value="ECO:0000315"/>
    <property type="project" value="FlyBase"/>
</dbReference>
<dbReference type="GO" id="GO:0006509">
    <property type="term" value="P:membrane protein ectodomain proteolysis"/>
    <property type="evidence" value="ECO:0000314"/>
    <property type="project" value="FlyBase"/>
</dbReference>
<dbReference type="GO" id="GO:0007220">
    <property type="term" value="P:Notch receptor processing"/>
    <property type="evidence" value="ECO:0000315"/>
    <property type="project" value="FlyBase"/>
</dbReference>
<dbReference type="GO" id="GO:0035333">
    <property type="term" value="P:Notch receptor processing, ligand-dependent"/>
    <property type="evidence" value="ECO:0000316"/>
    <property type="project" value="FlyBase"/>
</dbReference>
<dbReference type="GO" id="GO:0007219">
    <property type="term" value="P:Notch signaling pathway"/>
    <property type="evidence" value="ECO:0000315"/>
    <property type="project" value="FlyBase"/>
</dbReference>
<dbReference type="GO" id="GO:0016485">
    <property type="term" value="P:protein processing"/>
    <property type="evidence" value="ECO:0000318"/>
    <property type="project" value="GO_Central"/>
</dbReference>
<dbReference type="GO" id="GO:0045314">
    <property type="term" value="P:regulation of compound eye photoreceptor development"/>
    <property type="evidence" value="ECO:0000315"/>
    <property type="project" value="FlyBase"/>
</dbReference>
<dbReference type="CDD" id="cd03881">
    <property type="entry name" value="M28_Nicastrin"/>
    <property type="match status" value="1"/>
</dbReference>
<dbReference type="FunFam" id="3.40.630.10:FF:000127">
    <property type="entry name" value="Nicastrin, isoform E"/>
    <property type="match status" value="1"/>
</dbReference>
<dbReference type="Gene3D" id="3.40.630.10">
    <property type="entry name" value="Zn peptidases"/>
    <property type="match status" value="1"/>
</dbReference>
<dbReference type="InterPro" id="IPR041084">
    <property type="entry name" value="Ncstrn_small"/>
</dbReference>
<dbReference type="InterPro" id="IPR008710">
    <property type="entry name" value="Nicastrin"/>
</dbReference>
<dbReference type="PANTHER" id="PTHR21092">
    <property type="entry name" value="NICASTRIN"/>
    <property type="match status" value="1"/>
</dbReference>
<dbReference type="PANTHER" id="PTHR21092:SF0">
    <property type="entry name" value="NICASTRIN"/>
    <property type="match status" value="1"/>
</dbReference>
<dbReference type="Pfam" id="PF18266">
    <property type="entry name" value="Ncstrn_small"/>
    <property type="match status" value="1"/>
</dbReference>
<dbReference type="Pfam" id="PF05450">
    <property type="entry name" value="Nicastrin"/>
    <property type="match status" value="1"/>
</dbReference>
<dbReference type="SUPFAM" id="SSF53187">
    <property type="entry name" value="Zn-dependent exopeptidases"/>
    <property type="match status" value="1"/>
</dbReference>
<name>NICA_DROME</name>
<proteinExistence type="evidence at protein level"/>
<sequence>MEMRLNAASIWLLILSYGATIAQGERTRDKMYEPIGGASCFRRLNGTHQTGCSSTYSGSVGVLHLINVEADLEFLLSSPPSPPYAPMIPPHLFTRNNLMRLKEAGPKNISVVLLINRTNQMKQFSHELNCPNQYSGLNSTSETCDASNPAKNWNPWGTGLLHEDFPFPIYYIADLDQVTKLEKCFQDFNNHNYETHALRSLCAVEVKSFMSAAVNTEVCMRRTNFINNLGGSKYCDPLEGRNVYATLYPRKPAIENNLETVHTNEKFILVTCRLDTTTMFDGVGLGAMDSLMGFAVFTHVAYLLKQLLPPQSKDLHNVLFVTFNGESYDYIGSQRFVYDMEKLQFPTESTGTPPIAFDNIDFMLDIGTLDDISNIKLHALNGTTLAQQILERLNNYAKSPRYGFNLNIQSEMSAHLPPTSAQSFLRRDPNFNALILNARPTNKYYHSIYDDADNVDFTYANTSKDFTQLTEVNDFKSLNPDSLQMKVRNVSSIVAMALYQTITGKEYTGTKVANPLMADEFLYCFLQSADCPLFKAASYPGSQLTNLPPMRYISVLGGSQESSGYTYRLLGYLLSQLQPDIHRDNCTDLPLHYFAGFNNIGECRLTTQNYSHALSPAFLIDGYDWSSGMYSTWTESTWSQFSARIFLRPSNVHQVTTLSVGIVVLIISFCLVYIISSRSEVLFEDLPASNAALFG</sequence>
<accession>Q9VC27</accession>
<comment type="function">
    <text evidence="3 4 5 6">Essential subunit of the gamma-secretase complex, an endoprotease complex that catalyzes the intramembrane cleavage of integral membrane proteins such as Notch. It probably represents a stabilizing cofactor required for the assembly of the gamma-secretase complex.</text>
</comment>
<comment type="subunit">
    <text>Component of the gamma-secretase complex, a complex composed of a presenilin (Psn) homodimer, nicastrin (Nct), Aph-1 and Pen-2.</text>
</comment>
<comment type="subcellular location">
    <subcellularLocation>
        <location evidence="1">Membrane</location>
        <topology evidence="1">Single-pass type I membrane protein</topology>
    </subcellularLocation>
</comment>
<comment type="similarity">
    <text evidence="8">Belongs to the nicastrin family.</text>
</comment>
<comment type="sequence caution" evidence="8">
    <conflict type="erroneous initiation">
        <sequence resource="EMBL-CDS" id="AAO25002"/>
    </conflict>
</comment>
<evidence type="ECO:0000250" key="1"/>
<evidence type="ECO:0000255" key="2"/>
<evidence type="ECO:0000269" key="3">
    <source>
    </source>
</evidence>
<evidence type="ECO:0000269" key="4">
    <source>
    </source>
</evidence>
<evidence type="ECO:0000269" key="5">
    <source>
    </source>
</evidence>
<evidence type="ECO:0000269" key="6">
    <source>
    </source>
</evidence>
<evidence type="ECO:0000303" key="7">
    <source>
    </source>
</evidence>
<evidence type="ECO:0000305" key="8"/>
<evidence type="ECO:0000312" key="9">
    <source>
        <dbReference type="FlyBase" id="FBgn0039234"/>
    </source>
</evidence>
<organism>
    <name type="scientific">Drosophila melanogaster</name>
    <name type="common">Fruit fly</name>
    <dbReference type="NCBI Taxonomy" id="7227"/>
    <lineage>
        <taxon>Eukaryota</taxon>
        <taxon>Metazoa</taxon>
        <taxon>Ecdysozoa</taxon>
        <taxon>Arthropoda</taxon>
        <taxon>Hexapoda</taxon>
        <taxon>Insecta</taxon>
        <taxon>Pterygota</taxon>
        <taxon>Neoptera</taxon>
        <taxon>Endopterygota</taxon>
        <taxon>Diptera</taxon>
        <taxon>Brachycera</taxon>
        <taxon>Muscomorpha</taxon>
        <taxon>Ephydroidea</taxon>
        <taxon>Drosophilidae</taxon>
        <taxon>Drosophila</taxon>
        <taxon>Sophophora</taxon>
    </lineage>
</organism>
<reference key="1">
    <citation type="journal article" date="2000" name="Nature">
        <title>Nicastrin modulates presenilin-mediated notch/glp-1 signal transduction and betaAPP processing.</title>
        <authorList>
            <person name="Yu G."/>
            <person name="Nishimura M."/>
            <person name="Arawaka S."/>
            <person name="Levitan D."/>
            <person name="Zhang L."/>
            <person name="Tandon A."/>
            <person name="Song Y.-Q."/>
            <person name="Rogaeva E."/>
            <person name="Chen F."/>
            <person name="Kawarai T."/>
            <person name="Supala A."/>
            <person name="Levesque L."/>
            <person name="Yu H."/>
            <person name="Yang D.-S."/>
            <person name="Holmes E."/>
            <person name="Milman P."/>
            <person name="Liang Y."/>
            <person name="Zhang D.M."/>
            <person name="Xu D.H."/>
            <person name="Sato C."/>
            <person name="Rogaev E."/>
            <person name="Smith M."/>
            <person name="Janus C."/>
            <person name="Zhang Y."/>
            <person name="Aebersold R."/>
            <person name="Farrer L.S."/>
            <person name="Sorbi S."/>
            <person name="Bruni A."/>
            <person name="Fraser P.E."/>
            <person name="St George-Hyslop P.H."/>
        </authorList>
    </citation>
    <scope>NUCLEOTIDE SEQUENCE [MRNA]</scope>
</reference>
<reference key="2">
    <citation type="journal article" date="2000" name="Science">
        <title>The genome sequence of Drosophila melanogaster.</title>
        <authorList>
            <person name="Adams M.D."/>
            <person name="Celniker S.E."/>
            <person name="Holt R.A."/>
            <person name="Evans C.A."/>
            <person name="Gocayne J.D."/>
            <person name="Amanatides P.G."/>
            <person name="Scherer S.E."/>
            <person name="Li P.W."/>
            <person name="Hoskins R.A."/>
            <person name="Galle R.F."/>
            <person name="George R.A."/>
            <person name="Lewis S.E."/>
            <person name="Richards S."/>
            <person name="Ashburner M."/>
            <person name="Henderson S.N."/>
            <person name="Sutton G.G."/>
            <person name="Wortman J.R."/>
            <person name="Yandell M.D."/>
            <person name="Zhang Q."/>
            <person name="Chen L.X."/>
            <person name="Brandon R.C."/>
            <person name="Rogers Y.-H.C."/>
            <person name="Blazej R.G."/>
            <person name="Champe M."/>
            <person name="Pfeiffer B.D."/>
            <person name="Wan K.H."/>
            <person name="Doyle C."/>
            <person name="Baxter E.G."/>
            <person name="Helt G."/>
            <person name="Nelson C.R."/>
            <person name="Miklos G.L.G."/>
            <person name="Abril J.F."/>
            <person name="Agbayani A."/>
            <person name="An H.-J."/>
            <person name="Andrews-Pfannkoch C."/>
            <person name="Baldwin D."/>
            <person name="Ballew R.M."/>
            <person name="Basu A."/>
            <person name="Baxendale J."/>
            <person name="Bayraktaroglu L."/>
            <person name="Beasley E.M."/>
            <person name="Beeson K.Y."/>
            <person name="Benos P.V."/>
            <person name="Berman B.P."/>
            <person name="Bhandari D."/>
            <person name="Bolshakov S."/>
            <person name="Borkova D."/>
            <person name="Botchan M.R."/>
            <person name="Bouck J."/>
            <person name="Brokstein P."/>
            <person name="Brottier P."/>
            <person name="Burtis K.C."/>
            <person name="Busam D.A."/>
            <person name="Butler H."/>
            <person name="Cadieu E."/>
            <person name="Center A."/>
            <person name="Chandra I."/>
            <person name="Cherry J.M."/>
            <person name="Cawley S."/>
            <person name="Dahlke C."/>
            <person name="Davenport L.B."/>
            <person name="Davies P."/>
            <person name="de Pablos B."/>
            <person name="Delcher A."/>
            <person name="Deng Z."/>
            <person name="Mays A.D."/>
            <person name="Dew I."/>
            <person name="Dietz S.M."/>
            <person name="Dodson K."/>
            <person name="Doup L.E."/>
            <person name="Downes M."/>
            <person name="Dugan-Rocha S."/>
            <person name="Dunkov B.C."/>
            <person name="Dunn P."/>
            <person name="Durbin K.J."/>
            <person name="Evangelista C.C."/>
            <person name="Ferraz C."/>
            <person name="Ferriera S."/>
            <person name="Fleischmann W."/>
            <person name="Fosler C."/>
            <person name="Gabrielian A.E."/>
            <person name="Garg N.S."/>
            <person name="Gelbart W.M."/>
            <person name="Glasser K."/>
            <person name="Glodek A."/>
            <person name="Gong F."/>
            <person name="Gorrell J.H."/>
            <person name="Gu Z."/>
            <person name="Guan P."/>
            <person name="Harris M."/>
            <person name="Harris N.L."/>
            <person name="Harvey D.A."/>
            <person name="Heiman T.J."/>
            <person name="Hernandez J.R."/>
            <person name="Houck J."/>
            <person name="Hostin D."/>
            <person name="Houston K.A."/>
            <person name="Howland T.J."/>
            <person name="Wei M.-H."/>
            <person name="Ibegwam C."/>
            <person name="Jalali M."/>
            <person name="Kalush F."/>
            <person name="Karpen G.H."/>
            <person name="Ke Z."/>
            <person name="Kennison J.A."/>
            <person name="Ketchum K.A."/>
            <person name="Kimmel B.E."/>
            <person name="Kodira C.D."/>
            <person name="Kraft C.L."/>
            <person name="Kravitz S."/>
            <person name="Kulp D."/>
            <person name="Lai Z."/>
            <person name="Lasko P."/>
            <person name="Lei Y."/>
            <person name="Levitsky A.A."/>
            <person name="Li J.H."/>
            <person name="Li Z."/>
            <person name="Liang Y."/>
            <person name="Lin X."/>
            <person name="Liu X."/>
            <person name="Mattei B."/>
            <person name="McIntosh T.C."/>
            <person name="McLeod M.P."/>
            <person name="McPherson D."/>
            <person name="Merkulov G."/>
            <person name="Milshina N.V."/>
            <person name="Mobarry C."/>
            <person name="Morris J."/>
            <person name="Moshrefi A."/>
            <person name="Mount S.M."/>
            <person name="Moy M."/>
            <person name="Murphy B."/>
            <person name="Murphy L."/>
            <person name="Muzny D.M."/>
            <person name="Nelson D.L."/>
            <person name="Nelson D.R."/>
            <person name="Nelson K.A."/>
            <person name="Nixon K."/>
            <person name="Nusskern D.R."/>
            <person name="Pacleb J.M."/>
            <person name="Palazzolo M."/>
            <person name="Pittman G.S."/>
            <person name="Pan S."/>
            <person name="Pollard J."/>
            <person name="Puri V."/>
            <person name="Reese M.G."/>
            <person name="Reinert K."/>
            <person name="Remington K."/>
            <person name="Saunders R.D.C."/>
            <person name="Scheeler F."/>
            <person name="Shen H."/>
            <person name="Shue B.C."/>
            <person name="Siden-Kiamos I."/>
            <person name="Simpson M."/>
            <person name="Skupski M.P."/>
            <person name="Smith T.J."/>
            <person name="Spier E."/>
            <person name="Spradling A.C."/>
            <person name="Stapleton M."/>
            <person name="Strong R."/>
            <person name="Sun E."/>
            <person name="Svirskas R."/>
            <person name="Tector C."/>
            <person name="Turner R."/>
            <person name="Venter E."/>
            <person name="Wang A.H."/>
            <person name="Wang X."/>
            <person name="Wang Z.-Y."/>
            <person name="Wassarman D.A."/>
            <person name="Weinstock G.M."/>
            <person name="Weissenbach J."/>
            <person name="Williams S.M."/>
            <person name="Woodage T."/>
            <person name="Worley K.C."/>
            <person name="Wu D."/>
            <person name="Yang S."/>
            <person name="Yao Q.A."/>
            <person name="Ye J."/>
            <person name="Yeh R.-F."/>
            <person name="Zaveri J.S."/>
            <person name="Zhan M."/>
            <person name="Zhang G."/>
            <person name="Zhao Q."/>
            <person name="Zheng L."/>
            <person name="Zheng X.H."/>
            <person name="Zhong F.N."/>
            <person name="Zhong W."/>
            <person name="Zhou X."/>
            <person name="Zhu S.C."/>
            <person name="Zhu X."/>
            <person name="Smith H.O."/>
            <person name="Gibbs R.A."/>
            <person name="Myers E.W."/>
            <person name="Rubin G.M."/>
            <person name="Venter J.C."/>
        </authorList>
    </citation>
    <scope>NUCLEOTIDE SEQUENCE [LARGE SCALE GENOMIC DNA]</scope>
    <source>
        <strain>Berkeley</strain>
    </source>
</reference>
<reference key="3">
    <citation type="journal article" date="2002" name="Genome Biol.">
        <title>Annotation of the Drosophila melanogaster euchromatic genome: a systematic review.</title>
        <authorList>
            <person name="Misra S."/>
            <person name="Crosby M.A."/>
            <person name="Mungall C.J."/>
            <person name="Matthews B.B."/>
            <person name="Campbell K.S."/>
            <person name="Hradecky P."/>
            <person name="Huang Y."/>
            <person name="Kaminker J.S."/>
            <person name="Millburn G.H."/>
            <person name="Prochnik S.E."/>
            <person name="Smith C.D."/>
            <person name="Tupy J.L."/>
            <person name="Whitfield E.J."/>
            <person name="Bayraktaroglu L."/>
            <person name="Berman B.P."/>
            <person name="Bettencourt B.R."/>
            <person name="Celniker S.E."/>
            <person name="de Grey A.D.N.J."/>
            <person name="Drysdale R.A."/>
            <person name="Harris N.L."/>
            <person name="Richter J."/>
            <person name="Russo S."/>
            <person name="Schroeder A.J."/>
            <person name="Shu S.Q."/>
            <person name="Stapleton M."/>
            <person name="Yamada C."/>
            <person name="Ashburner M."/>
            <person name="Gelbart W.M."/>
            <person name="Rubin G.M."/>
            <person name="Lewis S.E."/>
        </authorList>
    </citation>
    <scope>GENOME REANNOTATION</scope>
    <source>
        <strain>Berkeley</strain>
    </source>
</reference>
<reference key="4">
    <citation type="submission" date="2003-01" db="EMBL/GenBank/DDBJ databases">
        <authorList>
            <person name="Stapleton M."/>
            <person name="Brokstein P."/>
            <person name="Hong L."/>
            <person name="Agbayani A."/>
            <person name="Carlson J.W."/>
            <person name="Champe M."/>
            <person name="Chavez C."/>
            <person name="Dorsett V."/>
            <person name="Dresnek D."/>
            <person name="Farfan D."/>
            <person name="Frise E."/>
            <person name="George R.A."/>
            <person name="Gonzalez M."/>
            <person name="Guarin H."/>
            <person name="Kronmiller B."/>
            <person name="Li P.W."/>
            <person name="Liao G."/>
            <person name="Miranda A."/>
            <person name="Mungall C.J."/>
            <person name="Nunoo J."/>
            <person name="Pacleb J.M."/>
            <person name="Paragas V."/>
            <person name="Park S."/>
            <person name="Patel S."/>
            <person name="Phouanenavong S."/>
            <person name="Wan K.H."/>
            <person name="Yu C."/>
            <person name="Lewis S.E."/>
            <person name="Rubin G.M."/>
            <person name="Celniker S.E."/>
        </authorList>
    </citation>
    <scope>NUCLEOTIDE SEQUENCE [LARGE SCALE MRNA]</scope>
    <source>
        <strain>Berkeley</strain>
        <tissue>Embryo</tissue>
    </source>
</reference>
<reference key="5">
    <citation type="journal article" date="2001" name="Nat. Cell Biol.">
        <title>Nicastrin is required for Presenilin-mediated transmembrane cleavage in Drosophila.</title>
        <authorList>
            <person name="Chung H.-M."/>
            <person name="Struhl G."/>
        </authorList>
    </citation>
    <scope>FUNCTION IN NOTCH SIGNALING</scope>
</reference>
<reference key="6">
    <citation type="journal article" date="2002" name="Dev. Cell">
        <title>Nicastrin is required for gamma-secretase cleavage of the Drosophila Notch receptor.</title>
        <authorList>
            <person name="Hu Y."/>
            <person name="Ye Y."/>
            <person name="Fortini M.E."/>
        </authorList>
    </citation>
    <scope>FUNCTION IN THE GAMMA-SECRETASE COMPLEX</scope>
</reference>
<reference key="7">
    <citation type="journal article" date="2002" name="Dev. Cell">
        <title>Drosophila nicastrin is essential for the intramembranous cleavage of notch.</title>
        <authorList>
            <person name="Lopez-Schier H."/>
            <person name="St Johnston D."/>
        </authorList>
    </citation>
    <scope>FUNCTION IN NOTCH SIGNALING</scope>
</reference>
<reference key="8">
    <citation type="journal article" date="2003" name="Nature">
        <title>The role of presenilin cofactors in the gamma-secretase complex.</title>
        <authorList>
            <person name="Takasugi N."/>
            <person name="Tomita T."/>
            <person name="Hayashi I."/>
            <person name="Tsuruoka M."/>
            <person name="Niimura M."/>
            <person name="Takahashi Y."/>
            <person name="Thinakaran G."/>
            <person name="Iwatsubo T."/>
        </authorList>
    </citation>
    <scope>FUNCTION IN THE GAMMA-SECRETASE COMPLEX</scope>
    <scope>INTERACTION WITH PSN; PEN-2 AND APH-1</scope>
</reference>
<keyword id="KW-0325">Glycoprotein</keyword>
<keyword id="KW-0472">Membrane</keyword>
<keyword id="KW-0914">Notch signaling pathway</keyword>
<keyword id="KW-1185">Reference proteome</keyword>
<keyword id="KW-0732">Signal</keyword>
<keyword id="KW-0812">Transmembrane</keyword>
<keyword id="KW-1133">Transmembrane helix</keyword>
<protein>
    <recommendedName>
        <fullName evidence="7">Nicastrin</fullName>
    </recommendedName>
</protein>